<keyword id="KW-0066">ATP synthesis</keyword>
<keyword id="KW-0138">CF(0)</keyword>
<keyword id="KW-0150">Chloroplast</keyword>
<keyword id="KW-0375">Hydrogen ion transport</keyword>
<keyword id="KW-0406">Ion transport</keyword>
<keyword id="KW-0472">Membrane</keyword>
<keyword id="KW-0934">Plastid</keyword>
<keyword id="KW-1185">Reference proteome</keyword>
<keyword id="KW-0793">Thylakoid</keyword>
<keyword id="KW-0812">Transmembrane</keyword>
<keyword id="KW-1133">Transmembrane helix</keyword>
<keyword id="KW-0813">Transport</keyword>
<accession>Q0P3K6</accession>
<protein>
    <recommendedName>
        <fullName evidence="1">ATP synthase subunit b, chloroplastic</fullName>
    </recommendedName>
    <alternativeName>
        <fullName evidence="1">ATP synthase F(0) sector subunit b</fullName>
    </alternativeName>
    <alternativeName>
        <fullName evidence="1">ATPase subunit I</fullName>
    </alternativeName>
</protein>
<proteinExistence type="inferred from homology"/>
<feature type="chain" id="PRO_0000368965" description="ATP synthase subunit b, chloroplastic">
    <location>
        <begin position="1"/>
        <end position="168"/>
    </location>
</feature>
<feature type="transmembrane region" description="Helical" evidence="1">
    <location>
        <begin position="20"/>
        <end position="37"/>
    </location>
</feature>
<organism>
    <name type="scientific">Ostreococcus tauri</name>
    <dbReference type="NCBI Taxonomy" id="70448"/>
    <lineage>
        <taxon>Eukaryota</taxon>
        <taxon>Viridiplantae</taxon>
        <taxon>Chlorophyta</taxon>
        <taxon>Mamiellophyceae</taxon>
        <taxon>Mamiellales</taxon>
        <taxon>Bathycoccaceae</taxon>
        <taxon>Ostreococcus</taxon>
    </lineage>
</organism>
<reference key="1">
    <citation type="journal article" date="2007" name="Mol. Biol. Evol.">
        <title>The complete chloroplast and mitochondrial DNA sequence of Ostreococcus tauri: organelle genomes of the smallest eukaryote are examples of compaction.</title>
        <authorList>
            <person name="Robbens S."/>
            <person name="Derelle E."/>
            <person name="Ferraz C."/>
            <person name="Wuyts J."/>
            <person name="Moreau H."/>
            <person name="Van de Peer Y."/>
        </authorList>
    </citation>
    <scope>NUCLEOTIDE SEQUENCE [LARGE SCALE GENOMIC DNA]</scope>
    <source>
        <strain>OTTH0595</strain>
    </source>
</reference>
<gene>
    <name evidence="1" type="primary">atpF</name>
    <name type="ordered locus">OtCpg00460</name>
</gene>
<name>ATPF_OSTTA</name>
<comment type="function">
    <text evidence="1">F(1)F(0) ATP synthase produces ATP from ADP in the presence of a proton or sodium gradient. F-type ATPases consist of two structural domains, F(1) containing the extramembraneous catalytic core and F(0) containing the membrane proton channel, linked together by a central stalk and a peripheral stalk. During catalysis, ATP synthesis in the catalytic domain of F(1) is coupled via a rotary mechanism of the central stalk subunits to proton translocation.</text>
</comment>
<comment type="function">
    <text evidence="1">Component of the F(0) channel, it forms part of the peripheral stalk, linking F(1) to F(0).</text>
</comment>
<comment type="subunit">
    <text evidence="1">F-type ATPases have 2 components, F(1) - the catalytic core - and F(0) - the membrane proton channel. F(1) has five subunits: alpha(3), beta(3), gamma(1), delta(1), epsilon(1). F(0) has four main subunits: a(1), b(1), b'(1) and c(10-14). The alpha and beta chains form an alternating ring which encloses part of the gamma chain. F(1) is attached to F(0) by a central stalk formed by the gamma and epsilon chains, while a peripheral stalk is formed by the delta, b and b' chains.</text>
</comment>
<comment type="subcellular location">
    <subcellularLocation>
        <location evidence="1">Plastid</location>
        <location evidence="1">Chloroplast thylakoid membrane</location>
        <topology evidence="1">Single-pass membrane protein</topology>
    </subcellularLocation>
</comment>
<comment type="miscellaneous">
    <text>In plastids the F-type ATPase is also known as CF(1)CF(0).</text>
</comment>
<comment type="similarity">
    <text evidence="1">Belongs to the ATPase B chain family.</text>
</comment>
<dbReference type="EMBL" id="CR954199">
    <property type="protein sequence ID" value="CAL36371.1"/>
    <property type="molecule type" value="Genomic_DNA"/>
</dbReference>
<dbReference type="RefSeq" id="YP_717249.1">
    <property type="nucleotide sequence ID" value="NC_008289.1"/>
</dbReference>
<dbReference type="SMR" id="Q0P3K6"/>
<dbReference type="FunCoup" id="Q0P3K6">
    <property type="interactions" value="124"/>
</dbReference>
<dbReference type="STRING" id="70448.Q0P3K6"/>
<dbReference type="GeneID" id="4238810"/>
<dbReference type="KEGG" id="ota:OstapCp46"/>
<dbReference type="eggNOG" id="ENOG502R390">
    <property type="taxonomic scope" value="Eukaryota"/>
</dbReference>
<dbReference type="InParanoid" id="Q0P3K6"/>
<dbReference type="Proteomes" id="UP000009170">
    <property type="component" value="Chloroplast"/>
</dbReference>
<dbReference type="GO" id="GO:0009535">
    <property type="term" value="C:chloroplast thylakoid membrane"/>
    <property type="evidence" value="ECO:0007669"/>
    <property type="project" value="UniProtKB-SubCell"/>
</dbReference>
<dbReference type="GO" id="GO:0045259">
    <property type="term" value="C:proton-transporting ATP synthase complex"/>
    <property type="evidence" value="ECO:0007669"/>
    <property type="project" value="UniProtKB-KW"/>
</dbReference>
<dbReference type="GO" id="GO:0046933">
    <property type="term" value="F:proton-transporting ATP synthase activity, rotational mechanism"/>
    <property type="evidence" value="ECO:0007669"/>
    <property type="project" value="UniProtKB-UniRule"/>
</dbReference>
<dbReference type="CDD" id="cd06503">
    <property type="entry name" value="ATP-synt_Fo_b"/>
    <property type="match status" value="1"/>
</dbReference>
<dbReference type="HAMAP" id="MF_01398">
    <property type="entry name" value="ATP_synth_b_bprime"/>
    <property type="match status" value="1"/>
</dbReference>
<dbReference type="InterPro" id="IPR002146">
    <property type="entry name" value="ATP_synth_b/b'su_bac/chlpt"/>
</dbReference>
<dbReference type="PANTHER" id="PTHR34264">
    <property type="entry name" value="ATP SYNTHASE SUBUNIT B, CHLOROPLASTIC"/>
    <property type="match status" value="1"/>
</dbReference>
<dbReference type="PANTHER" id="PTHR34264:SF3">
    <property type="entry name" value="ATP SYNTHASE SUBUNIT B, CHLOROPLASTIC"/>
    <property type="match status" value="1"/>
</dbReference>
<dbReference type="Pfam" id="PF00430">
    <property type="entry name" value="ATP-synt_B"/>
    <property type="match status" value="1"/>
</dbReference>
<geneLocation type="chloroplast"/>
<sequence length="168" mass="18703">MVSLAEGFGFNTNILETNVLNLAVVLPIVFTLGRDTLTSMLDTRREKILGSLRSADDRFKQAQLELDTAKAELATANDKVKDIKSEGRKTLEALTAEQSSRMAEVATRFAGLKDETIRLEEEKAIAQFRKQLVNVAFEKAIVGIQSQMNASLHRKYIDAKISLMTSRL</sequence>
<evidence type="ECO:0000255" key="1">
    <source>
        <dbReference type="HAMAP-Rule" id="MF_01398"/>
    </source>
</evidence>